<evidence type="ECO:0000250" key="1"/>
<evidence type="ECO:0000255" key="2">
    <source>
        <dbReference type="PROSITE-ProRule" id="PRU00173"/>
    </source>
</evidence>
<evidence type="ECO:0000305" key="3"/>
<comment type="catalytic activity">
    <reaction>
        <text>thiosulfate + hydrogen cyanide = thiocyanate + sulfite + 2 H(+)</text>
        <dbReference type="Rhea" id="RHEA:16881"/>
        <dbReference type="ChEBI" id="CHEBI:15378"/>
        <dbReference type="ChEBI" id="CHEBI:17359"/>
        <dbReference type="ChEBI" id="CHEBI:18022"/>
        <dbReference type="ChEBI" id="CHEBI:18407"/>
        <dbReference type="ChEBI" id="CHEBI:33542"/>
        <dbReference type="EC" id="2.8.1.1"/>
    </reaction>
</comment>
<comment type="domain">
    <text evidence="1">Contains two rhodanese domains with different primary structures but with near identical secondary structure conformations suggesting a common evolutionary origin. Only the C-terminal rhodanese domain contains the catalytic cysteine residue (By similarity).</text>
</comment>
<comment type="sequence caution" evidence="3">
    <conflict type="erroneous initiation">
        <sequence resource="EMBL-CDS" id="AAK46633"/>
    </conflict>
</comment>
<sequence>MQARGQVLITAAELAGMIQAGDPVSILDVRWRLDEPDGHAAYLQGHLPGAVFVSLEDELSDHTIAGRGRHPLPSGASLQATVRRCGIRHDVPVVVYDDWNRAGSARAWWVLTAAGIANVRILDGGLPAWRSAGGSIETGQVSPQLGNVTVLHDDLYAGQRLTLTAQQAGAGGVTLLDARVPERFRGDVEPVDAVAGHIPGAINVPSGSVLADDGTFLGNGALNALLSDHGIDHGGRVGVYCGSGVSAAVIVAALAVIGQDAELFPGSWSEWSSDPTRPVGRGTA</sequence>
<organism>
    <name type="scientific">Mycobacterium tuberculosis (strain CDC 1551 / Oshkosh)</name>
    <dbReference type="NCBI Taxonomy" id="83331"/>
    <lineage>
        <taxon>Bacteria</taxon>
        <taxon>Bacillati</taxon>
        <taxon>Actinomycetota</taxon>
        <taxon>Actinomycetes</taxon>
        <taxon>Mycobacteriales</taxon>
        <taxon>Mycobacteriaceae</taxon>
        <taxon>Mycobacterium</taxon>
        <taxon>Mycobacterium tuberculosis complex</taxon>
    </lineage>
</organism>
<dbReference type="EC" id="2.8.1.1"/>
<dbReference type="EMBL" id="AE000516">
    <property type="protein sequence ID" value="AAK46633.1"/>
    <property type="status" value="ALT_INIT"/>
    <property type="molecule type" value="Genomic_DNA"/>
</dbReference>
<dbReference type="PIR" id="G70732">
    <property type="entry name" value="G70732"/>
</dbReference>
<dbReference type="RefSeq" id="WP_003899253.1">
    <property type="nucleotide sequence ID" value="NZ_KK341227.1"/>
</dbReference>
<dbReference type="SMR" id="P9WHF4"/>
<dbReference type="KEGG" id="mtc:MT2348"/>
<dbReference type="PATRIC" id="fig|83331.31.peg.2527"/>
<dbReference type="HOGENOM" id="CLU_031618_0_0_11"/>
<dbReference type="Proteomes" id="UP000001020">
    <property type="component" value="Chromosome"/>
</dbReference>
<dbReference type="GO" id="GO:0004792">
    <property type="term" value="F:thiosulfate-cyanide sulfurtransferase activity"/>
    <property type="evidence" value="ECO:0007669"/>
    <property type="project" value="UniProtKB-EC"/>
</dbReference>
<dbReference type="CDD" id="cd01448">
    <property type="entry name" value="TST_Repeat_1"/>
    <property type="match status" value="1"/>
</dbReference>
<dbReference type="CDD" id="cd01449">
    <property type="entry name" value="TST_Repeat_2"/>
    <property type="match status" value="1"/>
</dbReference>
<dbReference type="FunFam" id="3.40.250.10:FF:000035">
    <property type="entry name" value="Thiosulfate sulfurtransferase"/>
    <property type="match status" value="1"/>
</dbReference>
<dbReference type="FunFam" id="3.40.250.10:FF:000048">
    <property type="entry name" value="Thiosulfate sulfurtransferase"/>
    <property type="match status" value="1"/>
</dbReference>
<dbReference type="Gene3D" id="3.40.250.10">
    <property type="entry name" value="Rhodanese-like domain"/>
    <property type="match status" value="2"/>
</dbReference>
<dbReference type="InterPro" id="IPR001763">
    <property type="entry name" value="Rhodanese-like_dom"/>
</dbReference>
<dbReference type="InterPro" id="IPR036873">
    <property type="entry name" value="Rhodanese-like_dom_sf"/>
</dbReference>
<dbReference type="InterPro" id="IPR001307">
    <property type="entry name" value="Thiosulphate_STrfase_CS"/>
</dbReference>
<dbReference type="InterPro" id="IPR045078">
    <property type="entry name" value="TST/MPST-like"/>
</dbReference>
<dbReference type="PANTHER" id="PTHR11364:SF27">
    <property type="entry name" value="SULFURTRANSFERASE"/>
    <property type="match status" value="1"/>
</dbReference>
<dbReference type="PANTHER" id="PTHR11364">
    <property type="entry name" value="THIOSULFATE SULFERTANSFERASE"/>
    <property type="match status" value="1"/>
</dbReference>
<dbReference type="Pfam" id="PF00581">
    <property type="entry name" value="Rhodanese"/>
    <property type="match status" value="2"/>
</dbReference>
<dbReference type="SMART" id="SM00450">
    <property type="entry name" value="RHOD"/>
    <property type="match status" value="2"/>
</dbReference>
<dbReference type="SUPFAM" id="SSF52821">
    <property type="entry name" value="Rhodanese/Cell cycle control phosphatase"/>
    <property type="match status" value="2"/>
</dbReference>
<dbReference type="PROSITE" id="PS00380">
    <property type="entry name" value="RHODANESE_1"/>
    <property type="match status" value="1"/>
</dbReference>
<dbReference type="PROSITE" id="PS00683">
    <property type="entry name" value="RHODANESE_2"/>
    <property type="match status" value="1"/>
</dbReference>
<dbReference type="PROSITE" id="PS50206">
    <property type="entry name" value="RHODANESE_3"/>
    <property type="match status" value="2"/>
</dbReference>
<proteinExistence type="inferred from homology"/>
<gene>
    <name type="primary">sseB</name>
    <name type="ordered locus">MT2348</name>
</gene>
<protein>
    <recommendedName>
        <fullName>Putative thiosulfate sulfurtransferase SseB</fullName>
        <ecNumber>2.8.1.1</ecNumber>
    </recommendedName>
</protein>
<reference key="1">
    <citation type="journal article" date="2002" name="J. Bacteriol.">
        <title>Whole-genome comparison of Mycobacterium tuberculosis clinical and laboratory strains.</title>
        <authorList>
            <person name="Fleischmann R.D."/>
            <person name="Alland D."/>
            <person name="Eisen J.A."/>
            <person name="Carpenter L."/>
            <person name="White O."/>
            <person name="Peterson J.D."/>
            <person name="DeBoy R.T."/>
            <person name="Dodson R.J."/>
            <person name="Gwinn M.L."/>
            <person name="Haft D.H."/>
            <person name="Hickey E.K."/>
            <person name="Kolonay J.F."/>
            <person name="Nelson W.C."/>
            <person name="Umayam L.A."/>
            <person name="Ermolaeva M.D."/>
            <person name="Salzberg S.L."/>
            <person name="Delcher A."/>
            <person name="Utterback T.R."/>
            <person name="Weidman J.F."/>
            <person name="Khouri H.M."/>
            <person name="Gill J."/>
            <person name="Mikula A."/>
            <person name="Bishai W."/>
            <person name="Jacobs W.R. Jr."/>
            <person name="Venter J.C."/>
            <person name="Fraser C.M."/>
        </authorList>
    </citation>
    <scope>NUCLEOTIDE SEQUENCE [LARGE SCALE GENOMIC DNA]</scope>
    <source>
        <strain>CDC 1551 / Oshkosh</strain>
    </source>
</reference>
<name>THT3_MYCTO</name>
<feature type="chain" id="PRO_0000428196" description="Putative thiosulfate sulfurtransferase SseB">
    <location>
        <begin position="1"/>
        <end position="284"/>
    </location>
</feature>
<feature type="domain" description="Rhodanese 1" evidence="2">
    <location>
        <begin position="20"/>
        <end position="138"/>
    </location>
</feature>
<feature type="domain" description="Rhodanese 2" evidence="2">
    <location>
        <begin position="169"/>
        <end position="280"/>
    </location>
</feature>
<feature type="active site" description="Cysteine persulfide intermediate" evidence="2">
    <location>
        <position position="241"/>
    </location>
</feature>
<feature type="binding site" evidence="1">
    <location>
        <position position="183"/>
    </location>
    <ligand>
        <name>substrate</name>
    </ligand>
</feature>
<accession>P9WHF4</accession>
<accession>L0TAR9</accession>
<accession>Q59570</accession>
<keyword id="KW-1185">Reference proteome</keyword>
<keyword id="KW-0677">Repeat</keyword>
<keyword id="KW-0808">Transferase</keyword>